<evidence type="ECO:0000255" key="1">
    <source>
        <dbReference type="HAMAP-Rule" id="MF_04071"/>
    </source>
</evidence>
<reference key="1">
    <citation type="journal article" date="1990" name="Virology">
        <title>Antigenic, sequence, and crystal variation in influenza B neuraminidase.</title>
        <authorList>
            <person name="Air G.M."/>
            <person name="Laver W.G."/>
            <person name="Luo M."/>
            <person name="Stray S.J."/>
            <person name="Legrone G."/>
            <person name="Webster R.G."/>
        </authorList>
    </citation>
    <scope>NUCLEOTIDE SEQUENCE [GENOMIC RNA]</scope>
</reference>
<reference key="2">
    <citation type="journal article" date="2005" name="N. Engl. J. Med.">
        <title>Neuraminidase inhibitors for influenza.</title>
        <authorList>
            <person name="Moscona A."/>
        </authorList>
    </citation>
    <scope>REVIEW</scope>
</reference>
<protein>
    <recommendedName>
        <fullName evidence="1">Neuraminidase</fullName>
        <ecNumber evidence="1">3.2.1.18</ecNumber>
    </recommendedName>
</protein>
<name>NRAM_INBLN</name>
<dbReference type="EC" id="3.2.1.18" evidence="1"/>
<dbReference type="EMBL" id="M30632">
    <property type="protein sequence ID" value="AAA43731.1"/>
    <property type="molecule type" value="Genomic_RNA"/>
</dbReference>
<dbReference type="PIR" id="C46347">
    <property type="entry name" value="C46347"/>
</dbReference>
<dbReference type="SMR" id="P67923"/>
<dbReference type="GlyCosmos" id="P67923">
    <property type="glycosylation" value="5 sites, No reported glycans"/>
</dbReference>
<dbReference type="GO" id="GO:0020002">
    <property type="term" value="C:host cell plasma membrane"/>
    <property type="evidence" value="ECO:0007669"/>
    <property type="project" value="UniProtKB-SubCell"/>
</dbReference>
<dbReference type="GO" id="GO:0016020">
    <property type="term" value="C:membrane"/>
    <property type="evidence" value="ECO:0007669"/>
    <property type="project" value="UniProtKB-UniRule"/>
</dbReference>
<dbReference type="GO" id="GO:0055036">
    <property type="term" value="C:virion membrane"/>
    <property type="evidence" value="ECO:0007669"/>
    <property type="project" value="UniProtKB-SubCell"/>
</dbReference>
<dbReference type="GO" id="GO:0004308">
    <property type="term" value="F:exo-alpha-sialidase activity"/>
    <property type="evidence" value="ECO:0007669"/>
    <property type="project" value="UniProtKB-UniRule"/>
</dbReference>
<dbReference type="GO" id="GO:0046872">
    <property type="term" value="F:metal ion binding"/>
    <property type="evidence" value="ECO:0007669"/>
    <property type="project" value="UniProtKB-UniRule"/>
</dbReference>
<dbReference type="GO" id="GO:0005975">
    <property type="term" value="P:carbohydrate metabolic process"/>
    <property type="evidence" value="ECO:0007669"/>
    <property type="project" value="InterPro"/>
</dbReference>
<dbReference type="GO" id="GO:0046761">
    <property type="term" value="P:viral budding from plasma membrane"/>
    <property type="evidence" value="ECO:0007669"/>
    <property type="project" value="UniProtKB-UniRule"/>
</dbReference>
<dbReference type="CDD" id="cd15483">
    <property type="entry name" value="Influenza_NA"/>
    <property type="match status" value="1"/>
</dbReference>
<dbReference type="Gene3D" id="2.120.10.10">
    <property type="match status" value="1"/>
</dbReference>
<dbReference type="HAMAP" id="MF_04071">
    <property type="entry name" value="INFV_NRAM"/>
    <property type="match status" value="1"/>
</dbReference>
<dbReference type="InterPro" id="IPR001860">
    <property type="entry name" value="Glyco_hydro_34"/>
</dbReference>
<dbReference type="InterPro" id="IPR033654">
    <property type="entry name" value="Sialidase_Influenza_A/B"/>
</dbReference>
<dbReference type="InterPro" id="IPR036278">
    <property type="entry name" value="Sialidase_sf"/>
</dbReference>
<dbReference type="Pfam" id="PF00064">
    <property type="entry name" value="Neur"/>
    <property type="match status" value="1"/>
</dbReference>
<dbReference type="SUPFAM" id="SSF50939">
    <property type="entry name" value="Sialidases"/>
    <property type="match status" value="1"/>
</dbReference>
<accession>P67923</accession>
<accession>P16193</accession>
<accession>P16197</accession>
<gene>
    <name evidence="1" type="primary">NA</name>
</gene>
<proteinExistence type="inferred from homology"/>
<organismHost>
    <name type="scientific">Homo sapiens</name>
    <name type="common">Human</name>
    <dbReference type="NCBI Taxonomy" id="9606"/>
</organismHost>
<keyword id="KW-0106">Calcium</keyword>
<keyword id="KW-1015">Disulfide bond</keyword>
<keyword id="KW-0325">Glycoprotein</keyword>
<keyword id="KW-0326">Glycosidase</keyword>
<keyword id="KW-1032">Host cell membrane</keyword>
<keyword id="KW-1043">Host membrane</keyword>
<keyword id="KW-0378">Hydrolase</keyword>
<keyword id="KW-0472">Membrane</keyword>
<keyword id="KW-0479">Metal-binding</keyword>
<keyword id="KW-0735">Signal-anchor</keyword>
<keyword id="KW-0812">Transmembrane</keyword>
<keyword id="KW-1133">Transmembrane helix</keyword>
<keyword id="KW-0946">Virion</keyword>
<feature type="chain" id="PRO_0000078733" description="Neuraminidase">
    <location>
        <begin position="1"/>
        <end position="465"/>
    </location>
</feature>
<feature type="topological domain" description="Intravirion" evidence="1">
    <location>
        <begin position="1"/>
        <end position="11"/>
    </location>
</feature>
<feature type="transmembrane region" description="Helical" evidence="1">
    <location>
        <begin position="12"/>
        <end position="34"/>
    </location>
</feature>
<feature type="topological domain" description="Virion surface" evidence="1">
    <location>
        <begin position="35"/>
        <end position="465"/>
    </location>
</feature>
<feature type="region of interest" description="Involved in apical transport and lipid raft association" evidence="1">
    <location>
        <begin position="13"/>
        <end position="35"/>
    </location>
</feature>
<feature type="region of interest" description="Hypervariable stalk region" evidence="1">
    <location>
        <begin position="38"/>
        <end position="85"/>
    </location>
</feature>
<feature type="region of interest" description="Head of neuraminidase" evidence="1">
    <location>
        <begin position="88"/>
        <end position="465"/>
    </location>
</feature>
<feature type="active site" description="Proton donor/acceptor" evidence="1">
    <location>
        <position position="148"/>
    </location>
</feature>
<feature type="active site" description="Nucleophile" evidence="1">
    <location>
        <position position="408"/>
    </location>
</feature>
<feature type="binding site" evidence="1">
    <location>
        <position position="115"/>
    </location>
    <ligand>
        <name>substrate</name>
    </ligand>
</feature>
<feature type="binding site" evidence="1">
    <location>
        <position position="149"/>
    </location>
    <ligand>
        <name>substrate</name>
    </ligand>
</feature>
<feature type="binding site" evidence="1">
    <location>
        <begin position="274"/>
        <end position="275"/>
    </location>
    <ligand>
        <name>substrate</name>
    </ligand>
</feature>
<feature type="binding site" evidence="1">
    <location>
        <position position="291"/>
    </location>
    <ligand>
        <name>substrate</name>
    </ligand>
</feature>
<feature type="binding site" evidence="1">
    <location>
        <position position="292"/>
    </location>
    <ligand>
        <name>Ca(2+)</name>
        <dbReference type="ChEBI" id="CHEBI:29108"/>
    </ligand>
</feature>
<feature type="binding site" evidence="1">
    <location>
        <position position="323"/>
    </location>
    <ligand>
        <name>Ca(2+)</name>
        <dbReference type="ChEBI" id="CHEBI:29108"/>
    </ligand>
</feature>
<feature type="binding site" evidence="1">
    <location>
        <position position="373"/>
    </location>
    <ligand>
        <name>substrate</name>
    </ligand>
</feature>
<feature type="glycosylation site" description="N-linked (GlcNAc...) asparagine; by host" evidence="1">
    <location>
        <position position="55"/>
    </location>
</feature>
<feature type="glycosylation site" description="N-linked (GlcNAc...) asparagine; by host" evidence="1">
    <location>
        <position position="63"/>
    </location>
</feature>
<feature type="glycosylation site" description="N-linked (GlcNAc...) asparagine; by host" evidence="1">
    <location>
        <position position="143"/>
    </location>
</feature>
<feature type="glycosylation site" description="N-linked (GlcNAc...) asparagine; by host" evidence="1">
    <location>
        <position position="283"/>
    </location>
</feature>
<feature type="glycosylation site" description="N-linked (GlcNAc...) asparagine; by host" evidence="1">
    <location>
        <position position="294"/>
    </location>
</feature>
<feature type="disulfide bond" evidence="1">
    <location>
        <begin position="86"/>
        <end position="419"/>
    </location>
</feature>
<feature type="disulfide bond" evidence="1">
    <location>
        <begin position="121"/>
        <end position="126"/>
    </location>
</feature>
<feature type="disulfide bond" evidence="1">
    <location>
        <begin position="181"/>
        <end position="228"/>
    </location>
</feature>
<feature type="disulfide bond" evidence="1">
    <location>
        <begin position="230"/>
        <end position="235"/>
    </location>
</feature>
<feature type="disulfide bond" evidence="1">
    <location>
        <begin position="276"/>
        <end position="290"/>
    </location>
</feature>
<feature type="disulfide bond" evidence="1">
    <location>
        <begin position="278"/>
        <end position="288"/>
    </location>
</feature>
<feature type="disulfide bond" evidence="1">
    <location>
        <begin position="317"/>
        <end position="336"/>
    </location>
</feature>
<feature type="disulfide bond" evidence="1">
    <location>
        <begin position="423"/>
        <end position="446"/>
    </location>
</feature>
<organism>
    <name type="scientific">Influenza B virus (strain B/Leningrad/179/1986)</name>
    <dbReference type="NCBI Taxonomy" id="11536"/>
    <lineage>
        <taxon>Viruses</taxon>
        <taxon>Riboviria</taxon>
        <taxon>Orthornavirae</taxon>
        <taxon>Negarnaviricota</taxon>
        <taxon>Polyploviricotina</taxon>
        <taxon>Insthoviricetes</taxon>
        <taxon>Articulavirales</taxon>
        <taxon>Orthomyxoviridae</taxon>
        <taxon>Betainfluenzavirus</taxon>
        <taxon>Betainfluenzavirus influenzae</taxon>
        <taxon>Influenza B virus</taxon>
    </lineage>
</organism>
<sequence>MLPSTIQTLTLFLTSGGVLLSLYVSASLSYLLYSDILLKFSPKITAPTMTLDCANASNVQAVNRSATKEMTFLLPEPEWTYPRLSCQGSTFQKALLISPHRFGEARGNSAPLIIREPFIACGPKECKHFALTHYAAQPGGYYNGTREDRNKLRHLISVKLGKIPTVENSIFHMAAWSGSACHDGREWTYIGVDGPDSNALIKIKYGEAYTDTYHSYANNILRTQESACNCIGGDCYLMITDGSASGISECRFLKIREGRIIKEIFPTGRVEHTEECTCGFASNKTIECACRDNNYTAKRPFVKLNVETDTAEIRLMCTETYLDTPRPDDGSITGPCESNGDKGRGGIKGGFVHQRMASKIGRWYSRTMSKTERMGMELYVKYDGDPWTDSDALAPSGVMVSIKEPGWYSFGFEIKDKKCDVPCIGIEMVHDGGKKTWHSAATAIYCLMGSGQLLWDTVTGVDMAL</sequence>
<comment type="function">
    <text evidence="1">Catalyzes the removal of terminal sialic acid residues from viral and cellular glycoconjugates. Cleaves off the terminal sialic acids on the glycosylated HA during virus budding to facilitate virus release. Additionally helps virus spread through the circulation by further removing sialic acids from the cell surface. These cleavages prevent self-aggregation and ensure the efficient spread of the progeny virus from cell to cell. Otherwise, infection would be limited to one round of replication. Described as a receptor-destroying enzyme because it cleaves a terminal sialic acid from the cellular receptors. May facilitate viral invasion of the upper airways by cleaving the sialic acid moieties on the mucin of the airway epithelial cells. Likely to plays a role in the budding process through its association with lipid rafts during intracellular transport. May additionally display a raft-association independent effect on budding. Plays a role in the determination of host range restriction on replication and virulence. Sialidase activity in late endosome/lysosome traffic seems to enhance virus replication.</text>
</comment>
<comment type="catalytic activity">
    <reaction evidence="1">
        <text>Hydrolysis of alpha-(2-&gt;3)-, alpha-(2-&gt;6)-, alpha-(2-&gt;8)- glycosidic linkages of terminal sialic acid residues in oligosaccharides, glycoproteins, glycolipids, colominic acid and synthetic substrates.</text>
        <dbReference type="EC" id="3.2.1.18"/>
    </reaction>
</comment>
<comment type="cofactor">
    <cofactor evidence="1">
        <name>Ca(2+)</name>
        <dbReference type="ChEBI" id="CHEBI:29108"/>
    </cofactor>
</comment>
<comment type="activity regulation">
    <text evidence="1">Inhibited by the neuraminidase inhibitors zanamivir (Relenza) and oseltamivir (Tamiflu). These drugs interfere with the release of progeny virus from infected cells and are effective against all influenza strains. Resistance to neuraminidase inhibitors is quite rare.</text>
</comment>
<comment type="subunit">
    <text evidence="1">Homotetramer.</text>
</comment>
<comment type="subcellular location">
    <subcellularLocation>
        <location evidence="1">Virion membrane</location>
    </subcellularLocation>
    <subcellularLocation>
        <location evidence="1">Host apical cell membrane</location>
        <topology evidence="1">Single-pass type II membrane protein</topology>
    </subcellularLocation>
    <text evidence="1">Preferentially accumulates at the apical plasma membrane in infected polarized epithelial cells, which is the virus assembly site. Uses lipid rafts for cell surface transport and apical sorting. In the virion, forms a mushroom-shaped spike on the surface of the membrane.</text>
</comment>
<comment type="domain">
    <text evidence="1">Intact N-terminus is essential for virion morphogenesis. Possesses two apical sorting signals, one in the ectodomain, which is likely to be a glycan, and the other in the transmembrane domain. The transmembrane domain also plays a role in lipid raft association.</text>
</comment>
<comment type="PTM">
    <text evidence="1">N-glycosylated.</text>
</comment>
<comment type="miscellaneous">
    <text>The influenza B genome consist of 8 RNA segments. Genetic variation of hemagglutinin and/or neuraminidase genes results in the emergence of new influenza strains. The mechanism of variation can be the result of point mutations or the result of genetic reassortment between segments of two different strains.</text>
</comment>
<comment type="similarity">
    <text evidence="1">Belongs to the glycosyl hydrolase 34 family.</text>
</comment>